<organism>
    <name type="scientific">Thermoplasma volcanium (strain ATCC 51530 / DSM 4299 / JCM 9571 / NBRC 15438 / GSS1)</name>
    <dbReference type="NCBI Taxonomy" id="273116"/>
    <lineage>
        <taxon>Archaea</taxon>
        <taxon>Methanobacteriati</taxon>
        <taxon>Thermoplasmatota</taxon>
        <taxon>Thermoplasmata</taxon>
        <taxon>Thermoplasmatales</taxon>
        <taxon>Thermoplasmataceae</taxon>
        <taxon>Thermoplasma</taxon>
    </lineage>
</organism>
<name>OTCC_THEVO</name>
<dbReference type="EC" id="2.1.3.3" evidence="2"/>
<dbReference type="EMBL" id="BA000011">
    <property type="protein sequence ID" value="BAB59415.1"/>
    <property type="molecule type" value="Genomic_DNA"/>
</dbReference>
<dbReference type="SMR" id="Q97C32"/>
<dbReference type="STRING" id="273116.gene:9381046"/>
<dbReference type="PaxDb" id="273116-14324487"/>
<dbReference type="KEGG" id="tvo:TVG0283269"/>
<dbReference type="eggNOG" id="arCOG00912">
    <property type="taxonomic scope" value="Archaea"/>
</dbReference>
<dbReference type="HOGENOM" id="CLU_043846_3_2_2"/>
<dbReference type="OrthoDB" id="4696at2157"/>
<dbReference type="PhylomeDB" id="Q97C32"/>
<dbReference type="UniPathway" id="UPA00254">
    <property type="reaction ID" value="UER00365"/>
</dbReference>
<dbReference type="Proteomes" id="UP000001017">
    <property type="component" value="Chromosome"/>
</dbReference>
<dbReference type="GO" id="GO:0005737">
    <property type="term" value="C:cytoplasm"/>
    <property type="evidence" value="ECO:0007669"/>
    <property type="project" value="UniProtKB-SubCell"/>
</dbReference>
<dbReference type="GO" id="GO:0016597">
    <property type="term" value="F:amino acid binding"/>
    <property type="evidence" value="ECO:0007669"/>
    <property type="project" value="InterPro"/>
</dbReference>
<dbReference type="GO" id="GO:0004585">
    <property type="term" value="F:ornithine carbamoyltransferase activity"/>
    <property type="evidence" value="ECO:0007669"/>
    <property type="project" value="UniProtKB-UniRule"/>
</dbReference>
<dbReference type="GO" id="GO:0042450">
    <property type="term" value="P:arginine biosynthetic process via ornithine"/>
    <property type="evidence" value="ECO:0007669"/>
    <property type="project" value="TreeGrafter"/>
</dbReference>
<dbReference type="GO" id="GO:0019547">
    <property type="term" value="P:arginine catabolic process to ornithine"/>
    <property type="evidence" value="ECO:0007669"/>
    <property type="project" value="UniProtKB-UniRule"/>
</dbReference>
<dbReference type="GO" id="GO:0019240">
    <property type="term" value="P:citrulline biosynthetic process"/>
    <property type="evidence" value="ECO:0007669"/>
    <property type="project" value="TreeGrafter"/>
</dbReference>
<dbReference type="FunFam" id="3.40.50.1370:FF:000008">
    <property type="entry name" value="Ornithine carbamoyltransferase"/>
    <property type="match status" value="1"/>
</dbReference>
<dbReference type="Gene3D" id="3.40.50.1370">
    <property type="entry name" value="Aspartate/ornithine carbamoyltransferase"/>
    <property type="match status" value="2"/>
</dbReference>
<dbReference type="HAMAP" id="MF_01109">
    <property type="entry name" value="OTCase"/>
    <property type="match status" value="1"/>
</dbReference>
<dbReference type="InterPro" id="IPR006132">
    <property type="entry name" value="Asp/Orn_carbamoyltranf_P-bd"/>
</dbReference>
<dbReference type="InterPro" id="IPR006130">
    <property type="entry name" value="Asp/Orn_carbamoylTrfase"/>
</dbReference>
<dbReference type="InterPro" id="IPR036901">
    <property type="entry name" value="Asp/Orn_carbamoylTrfase_sf"/>
</dbReference>
<dbReference type="InterPro" id="IPR006131">
    <property type="entry name" value="Asp_carbamoyltransf_Asp/Orn-bd"/>
</dbReference>
<dbReference type="InterPro" id="IPR002292">
    <property type="entry name" value="Orn/put_carbamltrans"/>
</dbReference>
<dbReference type="InterPro" id="IPR024904">
    <property type="entry name" value="OTCase_ArgI"/>
</dbReference>
<dbReference type="NCBIfam" id="TIGR00658">
    <property type="entry name" value="orni_carb_tr"/>
    <property type="match status" value="1"/>
</dbReference>
<dbReference type="NCBIfam" id="NF001986">
    <property type="entry name" value="PRK00779.1"/>
    <property type="match status" value="1"/>
</dbReference>
<dbReference type="PANTHER" id="PTHR45753">
    <property type="entry name" value="ORNITHINE CARBAMOYLTRANSFERASE, MITOCHONDRIAL"/>
    <property type="match status" value="1"/>
</dbReference>
<dbReference type="PANTHER" id="PTHR45753:SF3">
    <property type="entry name" value="ORNITHINE TRANSCARBAMYLASE, MITOCHONDRIAL"/>
    <property type="match status" value="1"/>
</dbReference>
<dbReference type="Pfam" id="PF00185">
    <property type="entry name" value="OTCace"/>
    <property type="match status" value="1"/>
</dbReference>
<dbReference type="Pfam" id="PF02729">
    <property type="entry name" value="OTCace_N"/>
    <property type="match status" value="1"/>
</dbReference>
<dbReference type="PRINTS" id="PR00100">
    <property type="entry name" value="AOTCASE"/>
</dbReference>
<dbReference type="PRINTS" id="PR00102">
    <property type="entry name" value="OTCASE"/>
</dbReference>
<dbReference type="SUPFAM" id="SSF53671">
    <property type="entry name" value="Aspartate/ornithine carbamoyltransferase"/>
    <property type="match status" value="1"/>
</dbReference>
<dbReference type="PROSITE" id="PS00097">
    <property type="entry name" value="CARBAMOYLTRANSFERASE"/>
    <property type="match status" value="1"/>
</dbReference>
<reference key="1">
    <citation type="journal article" date="2000" name="Proc. Natl. Acad. Sci. U.S.A.">
        <title>Archaeal adaptation to higher temperatures revealed by genomic sequence of Thermoplasma volcanium.</title>
        <authorList>
            <person name="Kawashima T."/>
            <person name="Amano N."/>
            <person name="Koike H."/>
            <person name="Makino S."/>
            <person name="Higuchi S."/>
            <person name="Kawashima-Ohya Y."/>
            <person name="Watanabe K."/>
            <person name="Yamazaki M."/>
            <person name="Kanehori K."/>
            <person name="Kawamoto T."/>
            <person name="Nunoshiba T."/>
            <person name="Yamamoto Y."/>
            <person name="Aramaki H."/>
            <person name="Makino K."/>
            <person name="Suzuki M."/>
        </authorList>
    </citation>
    <scope>NUCLEOTIDE SEQUENCE [LARGE SCALE GENOMIC DNA]</scope>
    <source>
        <strain>ATCC 51530 / DSM 4299 / JCM 9571 / NBRC 15438 / GSS1</strain>
    </source>
</reference>
<feature type="chain" id="PRO_0000113080" description="Ornithine carbamoyltransferase, catabolic">
    <location>
        <begin position="1"/>
        <end position="305"/>
    </location>
</feature>
<feature type="binding site" evidence="2">
    <location>
        <begin position="50"/>
        <end position="53"/>
    </location>
    <ligand>
        <name>carbamoyl phosphate</name>
        <dbReference type="ChEBI" id="CHEBI:58228"/>
    </ligand>
</feature>
<feature type="binding site" evidence="2">
    <location>
        <position position="77"/>
    </location>
    <ligand>
        <name>carbamoyl phosphate</name>
        <dbReference type="ChEBI" id="CHEBI:58228"/>
    </ligand>
</feature>
<feature type="binding site" evidence="2">
    <location>
        <position position="101"/>
    </location>
    <ligand>
        <name>carbamoyl phosphate</name>
        <dbReference type="ChEBI" id="CHEBI:58228"/>
    </ligand>
</feature>
<feature type="binding site" evidence="2">
    <location>
        <begin position="128"/>
        <end position="131"/>
    </location>
    <ligand>
        <name>carbamoyl phosphate</name>
        <dbReference type="ChEBI" id="CHEBI:58228"/>
    </ligand>
</feature>
<feature type="binding site" evidence="2">
    <location>
        <position position="159"/>
    </location>
    <ligand>
        <name>L-ornithine</name>
        <dbReference type="ChEBI" id="CHEBI:46911"/>
    </ligand>
</feature>
<feature type="binding site" evidence="2">
    <location>
        <position position="223"/>
    </location>
    <ligand>
        <name>L-ornithine</name>
        <dbReference type="ChEBI" id="CHEBI:46911"/>
    </ligand>
</feature>
<feature type="binding site" evidence="2">
    <location>
        <begin position="227"/>
        <end position="228"/>
    </location>
    <ligand>
        <name>L-ornithine</name>
        <dbReference type="ChEBI" id="CHEBI:46911"/>
    </ligand>
</feature>
<feature type="binding site" evidence="2">
    <location>
        <begin position="263"/>
        <end position="264"/>
    </location>
    <ligand>
        <name>carbamoyl phosphate</name>
        <dbReference type="ChEBI" id="CHEBI:58228"/>
    </ligand>
</feature>
<feature type="binding site" evidence="2">
    <location>
        <position position="291"/>
    </location>
    <ligand>
        <name>carbamoyl phosphate</name>
        <dbReference type="ChEBI" id="CHEBI:58228"/>
    </ligand>
</feature>
<gene>
    <name evidence="2" type="primary">arcB</name>
    <name type="ordered locus">TV0273</name>
    <name type="ORF">TVG0283269</name>
</gene>
<accession>Q97C32</accession>
<proteinExistence type="inferred from homology"/>
<protein>
    <recommendedName>
        <fullName evidence="2">Ornithine carbamoyltransferase, catabolic</fullName>
        <shortName evidence="2">OTCase</shortName>
        <ecNumber evidence="2">2.1.3.3</ecNumber>
    </recommendedName>
</protein>
<comment type="function">
    <text evidence="1">Reversibly catalyzes the transfer of the carbamoyl group from carbamoyl phosphate (CP) to the N(epsilon) atom of ornithine (ORN) to produce L-citrulline.</text>
</comment>
<comment type="catalytic activity">
    <reaction evidence="2">
        <text>carbamoyl phosphate + L-ornithine = L-citrulline + phosphate + H(+)</text>
        <dbReference type="Rhea" id="RHEA:19513"/>
        <dbReference type="ChEBI" id="CHEBI:15378"/>
        <dbReference type="ChEBI" id="CHEBI:43474"/>
        <dbReference type="ChEBI" id="CHEBI:46911"/>
        <dbReference type="ChEBI" id="CHEBI:57743"/>
        <dbReference type="ChEBI" id="CHEBI:58228"/>
        <dbReference type="EC" id="2.1.3.3"/>
    </reaction>
</comment>
<comment type="pathway">
    <text evidence="2">Amino-acid degradation; L-arginine degradation via ADI pathway; carbamoyl phosphate from L-arginine: step 2/2.</text>
</comment>
<comment type="subcellular location">
    <subcellularLocation>
        <location evidence="2">Cytoplasm</location>
    </subcellularLocation>
</comment>
<comment type="similarity">
    <text evidence="2">Belongs to the aspartate/ornithine carbamoyltransferase superfamily. OTCase family.</text>
</comment>
<sequence length="305" mass="34157">MAKRDILSVLDMKNDLDEIINLSIELKKNRYRSYESLRNKMLGLIFEKPSTRTRTSLEVAIDQLGGHAVYLNPSEMQLGRGETISDTGHVLSRFLDAIAYRAFDHKNVVELARSTSIPVINALDDVEHPLQIVADFMTVKEKKGKFSGLKFSYIGDGNNMANSLMLGAAILGVDIYVATPHGYEPKSEFVDKAKQVAKERGSKVIITNDAIEAAKDADVIYTDVWISMGEESKRGEKEKAFTKYQINSDLVSNAKKDYIFMHCLPAHRGLEVTDDVADSINSVIFDEAENRLHSEKGVLYKLLSY</sequence>
<evidence type="ECO:0000250" key="1"/>
<evidence type="ECO:0000255" key="2">
    <source>
        <dbReference type="HAMAP-Rule" id="MF_01109"/>
    </source>
</evidence>
<keyword id="KW-0056">Arginine metabolism</keyword>
<keyword id="KW-0963">Cytoplasm</keyword>
<keyword id="KW-0808">Transferase</keyword>